<keyword id="KW-0204">Cytolysis</keyword>
<keyword id="KW-0406">Ion transport</keyword>
<keyword id="KW-0472">Membrane</keyword>
<keyword id="KW-0166">Nematocyst</keyword>
<keyword id="KW-0964">Secreted</keyword>
<keyword id="KW-1052">Target cell membrane</keyword>
<keyword id="KW-1053">Target membrane</keyword>
<keyword id="KW-0800">Toxin</keyword>
<keyword id="KW-0812">Transmembrane</keyword>
<keyword id="KW-0813">Transport</keyword>
<name>ACTP1_TERAN</name>
<organism>
    <name type="scientific">Terebra anilis</name>
    <name type="common">Auger snail</name>
    <name type="synonym">Cinguloterebra anilis</name>
    <dbReference type="NCBI Taxonomy" id="553697"/>
    <lineage>
        <taxon>Eukaryota</taxon>
        <taxon>Metazoa</taxon>
        <taxon>Spiralia</taxon>
        <taxon>Lophotrochozoa</taxon>
        <taxon>Mollusca</taxon>
        <taxon>Gastropoda</taxon>
        <taxon>Caenogastropoda</taxon>
        <taxon>Neogastropoda</taxon>
        <taxon>Conoidea</taxon>
        <taxon>Terebridae</taxon>
        <taxon>Terebra</taxon>
    </lineage>
</organism>
<feature type="chain" id="PRO_0000435100" description="Tereporin-Ca1">
    <location>
        <begin position="1" status="less than"/>
        <end position="190" status="greater than"/>
    </location>
</feature>
<feature type="region of interest" description="N-terminal region" evidence="4">
    <location>
        <begin position="2"/>
        <end position="21"/>
    </location>
</feature>
<feature type="short sequence motif" description="Cell attachment site, crucial for protein stability" evidence="3 5">
    <location>
        <begin position="138"/>
        <end position="140"/>
    </location>
</feature>
<feature type="binding site" evidence="3">
    <location>
        <position position="78"/>
    </location>
    <ligand>
        <name>phosphocholine</name>
        <dbReference type="ChEBI" id="CHEBI:295975"/>
    </ligand>
</feature>
<feature type="binding site" evidence="3">
    <location>
        <position position="96"/>
    </location>
    <ligand>
        <name>phosphocholine</name>
        <dbReference type="ChEBI" id="CHEBI:295975"/>
    </ligand>
</feature>
<feature type="binding site" evidence="3">
    <location>
        <position position="98"/>
    </location>
    <ligand>
        <name>phosphocholine</name>
        <dbReference type="ChEBI" id="CHEBI:295975"/>
    </ligand>
</feature>
<feature type="binding site" evidence="3">
    <location>
        <position position="131"/>
    </location>
    <ligand>
        <name>phosphocholine</name>
        <dbReference type="ChEBI" id="CHEBI:295975"/>
    </ligand>
</feature>
<feature type="binding site" evidence="3">
    <location>
        <position position="132"/>
    </location>
    <ligand>
        <name>phosphocholine</name>
        <dbReference type="ChEBI" id="CHEBI:295975"/>
    </ligand>
</feature>
<feature type="non-terminal residue">
    <location>
        <position position="1"/>
    </location>
</feature>
<feature type="non-terminal residue">
    <location>
        <position position="190"/>
    </location>
</feature>
<protein>
    <recommendedName>
        <fullName evidence="6">Tereporin-Ca1</fullName>
    </recommendedName>
    <alternativeName>
        <fullName evidence="6">Actinoporin-like protein</fullName>
    </alternativeName>
</protein>
<accession>P0DN66</accession>
<comment type="function">
    <text evidence="1">Pore-forming protein that forms pores of around 1 nm and causes cardiac stimulation and cytolysis.</text>
</comment>
<comment type="subunit">
    <text evidence="2">Octamer or nonamer in membranes. Monomer in the soluble state.</text>
</comment>
<comment type="subcellular location">
    <subcellularLocation>
        <location evidence="2">Secreted</location>
    </subcellularLocation>
    <subcellularLocation>
        <location evidence="3">Nematocyst</location>
    </subcellularLocation>
    <subcellularLocation>
        <location evidence="2">Target cell membrane</location>
    </subcellularLocation>
    <text evidence="2">Forms an alpha-helical membrane channel in the prey.</text>
</comment>
<comment type="tissue specificity">
    <text evidence="7">Expressed by the venom duct.</text>
</comment>
<comment type="similarity">
    <text evidence="6">Belongs to the actinoporin family. Conoidea subfamily.</text>
</comment>
<sequence length="190" mass="21176">ITAGSSLAGTTLSGLAASGYRVTCAIQVENWTRYPLLYPTVRVNYNGAVTVNPSPILPGKKEGFSVRKPSGTATGVSGTVSWELSGAHRRFVLMWSAPFNFDHYSNWMGVGLTQPGVTRVPPGKAWFDLMYYGPTDCKGELRYERGEFYYTIDPVIYRDENFEIVGTMTNVHNALIKVVIRPTRKNWKDL</sequence>
<evidence type="ECO:0000250" key="1"/>
<evidence type="ECO:0000250" key="2">
    <source>
        <dbReference type="UniProtKB" id="B9W5G6"/>
    </source>
</evidence>
<evidence type="ECO:0000250" key="3">
    <source>
        <dbReference type="UniProtKB" id="P07845"/>
    </source>
</evidence>
<evidence type="ECO:0000250" key="4">
    <source>
        <dbReference type="UniProtKB" id="P61914"/>
    </source>
</evidence>
<evidence type="ECO:0000255" key="5"/>
<evidence type="ECO:0000305" key="6"/>
<evidence type="ECO:0000305" key="7">
    <source ref="1"/>
</evidence>
<dbReference type="SMR" id="P0DN66"/>
<dbReference type="GO" id="GO:0005576">
    <property type="term" value="C:extracellular region"/>
    <property type="evidence" value="ECO:0007669"/>
    <property type="project" value="UniProtKB-SubCell"/>
</dbReference>
<dbReference type="GO" id="GO:0016020">
    <property type="term" value="C:membrane"/>
    <property type="evidence" value="ECO:0007669"/>
    <property type="project" value="UniProtKB-KW"/>
</dbReference>
<dbReference type="GO" id="GO:0042151">
    <property type="term" value="C:nematocyst"/>
    <property type="evidence" value="ECO:0007669"/>
    <property type="project" value="UniProtKB-SubCell"/>
</dbReference>
<dbReference type="GO" id="GO:0044218">
    <property type="term" value="C:other organism cell membrane"/>
    <property type="evidence" value="ECO:0007669"/>
    <property type="project" value="UniProtKB-KW"/>
</dbReference>
<dbReference type="GO" id="GO:0090729">
    <property type="term" value="F:toxin activity"/>
    <property type="evidence" value="ECO:0007669"/>
    <property type="project" value="UniProtKB-KW"/>
</dbReference>
<dbReference type="GO" id="GO:0031640">
    <property type="term" value="P:killing of cells of another organism"/>
    <property type="evidence" value="ECO:0007669"/>
    <property type="project" value="UniProtKB-KW"/>
</dbReference>
<dbReference type="GO" id="GO:0006811">
    <property type="term" value="P:monoatomic ion transport"/>
    <property type="evidence" value="ECO:0007669"/>
    <property type="project" value="UniProtKB-KW"/>
</dbReference>
<dbReference type="Gene3D" id="2.60.270.20">
    <property type="entry name" value="Cytolysin/lectin"/>
    <property type="match status" value="1"/>
</dbReference>
<dbReference type="InterPro" id="IPR050677">
    <property type="entry name" value="Actinoporin_PFT"/>
</dbReference>
<dbReference type="InterPro" id="IPR015926">
    <property type="entry name" value="Cytolysin/lectin"/>
</dbReference>
<dbReference type="PANTHER" id="PTHR40388">
    <property type="entry name" value="BRYOPORIN"/>
    <property type="match status" value="1"/>
</dbReference>
<dbReference type="PANTHER" id="PTHR40388:SF1">
    <property type="entry name" value="BRYOPORIN"/>
    <property type="match status" value="1"/>
</dbReference>
<dbReference type="SUPFAM" id="SSF63724">
    <property type="entry name" value="Cytolysin/lectin"/>
    <property type="match status" value="1"/>
</dbReference>
<proteinExistence type="evidence at transcript level"/>
<reference key="1">
    <citation type="unpublished observations" date="2015-10">
        <authorList>
            <person name="Gorson J."/>
            <person name="Anand P."/>
            <person name="Holford M."/>
        </authorList>
    </citation>
    <scope>NUCLEOTIDE SEQUENCE [MRNA]</scope>
</reference>